<keyword id="KW-1284">Encapsulin nanocompartment</keyword>
<keyword id="KW-0349">Heme</keyword>
<keyword id="KW-0408">Iron</keyword>
<keyword id="KW-0479">Metal-binding</keyword>
<keyword id="KW-0560">Oxidoreductase</keyword>
<keyword id="KW-0575">Peroxidase</keyword>
<name>DYP_RHOE4</name>
<proteinExistence type="evidence at protein level"/>
<accession>C0ZVK5</accession>
<organism>
    <name type="scientific">Rhodococcus erythropolis (strain PR4 / NBRC 100887)</name>
    <dbReference type="NCBI Taxonomy" id="234621"/>
    <lineage>
        <taxon>Bacteria</taxon>
        <taxon>Bacillati</taxon>
        <taxon>Actinomycetota</taxon>
        <taxon>Actinomycetes</taxon>
        <taxon>Mycobacteriales</taxon>
        <taxon>Nocardiaceae</taxon>
        <taxon>Rhodococcus</taxon>
        <taxon>Rhodococcus erythropolis group</taxon>
    </lineage>
</organism>
<comment type="function">
    <text evidence="2 3 6">Cargo protein of a type 1 encapsulin nanocompartment (PubMed:24981030). Has both general peroxidase activity and dye-decolorizing activity. Can catalyze the oxidation of both protoporphyrinogen IX and coproporphyrinogen III to their corresponding porphyrins. Also efficiently decolorizes the dyes alizarin red and Cibacron blue F3GA (By similarity). This cargo-loaded encapsulin nanocompartment is probably involved in protection against oxidative damage (By similarity).</text>
</comment>
<comment type="cofactor">
    <cofactor evidence="3">
        <name>heme b</name>
        <dbReference type="ChEBI" id="CHEBI:60344"/>
    </cofactor>
</comment>
<comment type="subunit">
    <text evidence="1">Homohexamer.</text>
</comment>
<comment type="subcellular location">
    <subcellularLocation>
        <location evidence="6">Encapsulin nanocompartment</location>
    </subcellularLocation>
</comment>
<comment type="domain">
    <text evidence="6">The C-terminal 38 residues (targeting peptide, TP) are sufficient to target this foreign proteins to the nanocompartment in vivo.</text>
</comment>
<comment type="biotechnology">
    <text evidence="6">The 38 C-terminal residues can be used to target foreign proteins to the nanocompartment.</text>
</comment>
<comment type="similarity">
    <text evidence="8">Belongs to the DyP-type peroxidase family.</text>
</comment>
<dbReference type="EC" id="1.11.1.-" evidence="3"/>
<dbReference type="EMBL" id="AP008957">
    <property type="protein sequence ID" value="BAH36699.1"/>
    <property type="molecule type" value="Genomic_DNA"/>
</dbReference>
<dbReference type="SMR" id="C0ZVK5"/>
<dbReference type="KEGG" id="rer:RER_59910"/>
<dbReference type="eggNOG" id="COG2837">
    <property type="taxonomic scope" value="Bacteria"/>
</dbReference>
<dbReference type="HOGENOM" id="CLU_044178_1_0_11"/>
<dbReference type="Proteomes" id="UP000002204">
    <property type="component" value="Chromosome"/>
</dbReference>
<dbReference type="GO" id="GO:0005829">
    <property type="term" value="C:cytosol"/>
    <property type="evidence" value="ECO:0007669"/>
    <property type="project" value="TreeGrafter"/>
</dbReference>
<dbReference type="GO" id="GO:0140737">
    <property type="term" value="C:encapsulin nanocompartment"/>
    <property type="evidence" value="ECO:0000314"/>
    <property type="project" value="UniProtKB"/>
</dbReference>
<dbReference type="GO" id="GO:0020037">
    <property type="term" value="F:heme binding"/>
    <property type="evidence" value="ECO:0007669"/>
    <property type="project" value="InterPro"/>
</dbReference>
<dbReference type="GO" id="GO:0046872">
    <property type="term" value="F:metal ion binding"/>
    <property type="evidence" value="ECO:0007669"/>
    <property type="project" value="UniProtKB-KW"/>
</dbReference>
<dbReference type="GO" id="GO:0004601">
    <property type="term" value="F:peroxidase activity"/>
    <property type="evidence" value="ECO:0007669"/>
    <property type="project" value="UniProtKB-KW"/>
</dbReference>
<dbReference type="InterPro" id="IPR011008">
    <property type="entry name" value="Dimeric_a/b-barrel"/>
</dbReference>
<dbReference type="InterPro" id="IPR048328">
    <property type="entry name" value="Dyp_perox_C"/>
</dbReference>
<dbReference type="InterPro" id="IPR048327">
    <property type="entry name" value="Dyp_perox_N"/>
</dbReference>
<dbReference type="InterPro" id="IPR006314">
    <property type="entry name" value="Dyp_peroxidase"/>
</dbReference>
<dbReference type="NCBIfam" id="TIGR01413">
    <property type="entry name" value="Dyp_perox_fam"/>
    <property type="match status" value="1"/>
</dbReference>
<dbReference type="PANTHER" id="PTHR30521">
    <property type="entry name" value="DEFERROCHELATASE/PEROXIDASE"/>
    <property type="match status" value="1"/>
</dbReference>
<dbReference type="PANTHER" id="PTHR30521:SF0">
    <property type="entry name" value="DYP-TYPE PEROXIDASE FAMILY PROTEIN"/>
    <property type="match status" value="1"/>
</dbReference>
<dbReference type="Pfam" id="PF20628">
    <property type="entry name" value="Dyp_perox_C"/>
    <property type="match status" value="1"/>
</dbReference>
<dbReference type="Pfam" id="PF04261">
    <property type="entry name" value="Dyp_perox_N"/>
    <property type="match status" value="1"/>
</dbReference>
<dbReference type="SUPFAM" id="SSF54909">
    <property type="entry name" value="Dimeric alpha+beta barrel"/>
    <property type="match status" value="1"/>
</dbReference>
<dbReference type="PROSITE" id="PS51404">
    <property type="entry name" value="DYP_PEROXIDASE"/>
    <property type="match status" value="1"/>
</dbReference>
<gene>
    <name type="ordered locus">RER_59910</name>
</gene>
<sequence>MALPAIPQPLLTPLTEAAIFLVFTIDEGGEQAVHDVLADISGLQRSIGFRVPAGGLAAVVGIGSDAWDRLFEGPRPAELHPFVELTGDKHHAPRTPGDLLFHIRARQMDLCFEFATVVTNRLAGAASVIDEVHGFKYFEQRDLMGFVDGTENPSGQAAYVAVTVGDEDPDFAGSSYVIVQKYLHDMSEWNSLPVEEQENVIGRSKLEDLEMDDDTKPANSHTALTVIEDESGEQIQILRDNMPFGHVGSAEMGTYFIGYSASPTVTEQMLTNMFIGNPVGNYDRILDFSTAVTGINFFVPTADFLDDPPDAPTRLVPEATFTAPISDGSLGIGSLKRSAQQ</sequence>
<evidence type="ECO:0000250" key="1">
    <source>
        <dbReference type="UniProtKB" id="A0A3T0E4B9"/>
    </source>
</evidence>
<evidence type="ECO:0000250" key="2">
    <source>
        <dbReference type="UniProtKB" id="I6WZG6"/>
    </source>
</evidence>
<evidence type="ECO:0000250" key="3">
    <source>
        <dbReference type="UniProtKB" id="P76536"/>
    </source>
</evidence>
<evidence type="ECO:0000250" key="4">
    <source>
        <dbReference type="UniProtKB" id="Q47KB1"/>
    </source>
</evidence>
<evidence type="ECO:0000250" key="5">
    <source>
        <dbReference type="UniProtKB" id="Q8XBI9"/>
    </source>
</evidence>
<evidence type="ECO:0000269" key="6">
    <source>
    </source>
</evidence>
<evidence type="ECO:0000303" key="7">
    <source>
    </source>
</evidence>
<evidence type="ECO:0000305" key="8"/>
<feature type="chain" id="PRO_0000455328" description="Dye-decolorizing peroxidase">
    <location>
        <begin position="1"/>
        <end position="341"/>
    </location>
</feature>
<feature type="region of interest" description="Targeting peptide" evidence="6">
    <location>
        <begin position="304"/>
        <end position="341"/>
    </location>
</feature>
<feature type="active site" description="Proton acceptor" evidence="4">
    <location>
        <position position="148"/>
    </location>
</feature>
<feature type="binding site" description="proximal binding residue" evidence="5">
    <location>
        <position position="221"/>
    </location>
    <ligand>
        <name>heme</name>
        <dbReference type="ChEBI" id="CHEBI:30413"/>
    </ligand>
    <ligandPart>
        <name>Fe</name>
        <dbReference type="ChEBI" id="CHEBI:18248"/>
    </ligandPart>
</feature>
<protein>
    <recommendedName>
        <fullName evidence="7">Dye-decolorizing peroxidase</fullName>
        <shortName evidence="7">DypB</shortName>
        <ecNumber evidence="3">1.11.1.-</ecNumber>
    </recommendedName>
</protein>
<reference key="1">
    <citation type="submission" date="2005-03" db="EMBL/GenBank/DDBJ databases">
        <title>Comparison of the complete genome sequences of Rhodococcus erythropolis PR4 and Rhodococcus opacus B4.</title>
        <authorList>
            <person name="Takarada H."/>
            <person name="Sekine M."/>
            <person name="Hosoyama A."/>
            <person name="Yamada R."/>
            <person name="Fujisawa T."/>
            <person name="Omata S."/>
            <person name="Shimizu A."/>
            <person name="Tsukatani N."/>
            <person name="Tanikawa S."/>
            <person name="Fujita N."/>
            <person name="Harayama S."/>
        </authorList>
    </citation>
    <scope>NUCLEOTIDE SEQUENCE [LARGE SCALE GENOMIC DNA]</scope>
    <source>
        <strain>PR4 / NBRC 100887</strain>
    </source>
</reference>
<reference key="2">
    <citation type="journal article" date="2015" name="Biotechnol. Bioeng.">
        <title>Packaging guest proteins into the encapsulin nanocompartment from Rhodococcus erythropolis N771.</title>
        <authorList>
            <person name="Tamura A."/>
            <person name="Fukutani Y."/>
            <person name="Takami T."/>
            <person name="Fujii M."/>
            <person name="Nakaguchi Y."/>
            <person name="Murakami Y."/>
            <person name="Noguchi K."/>
            <person name="Yohda M."/>
            <person name="Odaka M."/>
        </authorList>
    </citation>
    <scope>SUBCELLULAR LOCATION</scope>
    <scope>DOMAIN</scope>
    <scope>BIOTECHNOLOGY</scope>
    <source>
        <strain>N771</strain>
    </source>
</reference>